<proteinExistence type="inferred from homology"/>
<accession>A0LUK5</accession>
<protein>
    <recommendedName>
        <fullName evidence="1">Holliday junction branch migration complex subunit RuvB</fullName>
        <ecNumber evidence="1">3.6.4.-</ecNumber>
    </recommendedName>
</protein>
<name>RUVB_ACIC1</name>
<organism>
    <name type="scientific">Acidothermus cellulolyticus (strain ATCC 43068 / DSM 8971 / 11B)</name>
    <dbReference type="NCBI Taxonomy" id="351607"/>
    <lineage>
        <taxon>Bacteria</taxon>
        <taxon>Bacillati</taxon>
        <taxon>Actinomycetota</taxon>
        <taxon>Actinomycetes</taxon>
        <taxon>Acidothermales</taxon>
        <taxon>Acidothermaceae</taxon>
        <taxon>Acidothermus</taxon>
    </lineage>
</organism>
<evidence type="ECO:0000255" key="1">
    <source>
        <dbReference type="HAMAP-Rule" id="MF_00016"/>
    </source>
</evidence>
<keyword id="KW-0067">ATP-binding</keyword>
<keyword id="KW-0963">Cytoplasm</keyword>
<keyword id="KW-0227">DNA damage</keyword>
<keyword id="KW-0233">DNA recombination</keyword>
<keyword id="KW-0234">DNA repair</keyword>
<keyword id="KW-0238">DNA-binding</keyword>
<keyword id="KW-0378">Hydrolase</keyword>
<keyword id="KW-0547">Nucleotide-binding</keyword>
<keyword id="KW-1185">Reference proteome</keyword>
<sequence length="367" mass="39760">MTDEPLTDRPPAVDLGRLLIDAHAESDEHAVEAALRPRRLDEFVGQQRVRDQLSLILDGAKQRGRPPDHILLSGPPGLGKTTLAMIVAAELNTPIRVTSGPAIQHAGDLAAVLTQLSEGEVLFLDEIHRMARPAEEMLYLAMEDFRVDVVVGKGPGASVIPLELAPFTLIGATTRTGLLPGPLRDRFGFTARLDFYEPADLERIVHRSARLLDVRITPDGAAEIARRSRGTPRIANRLLRRVRDYAEVRADGVITCEVAQAALAVYEVDEHGLDRLDRAVLDALVRRFGGGPVGLGTVAVAVGEEPETVEEVAEPFLFRAGFLIRTPRGRMATAAAWRHLGITPPPEALGAAQLAFEIDRDAGEPTA</sequence>
<comment type="function">
    <text evidence="1">The RuvA-RuvB-RuvC complex processes Holliday junction (HJ) DNA during genetic recombination and DNA repair, while the RuvA-RuvB complex plays an important role in the rescue of blocked DNA replication forks via replication fork reversal (RFR). RuvA specifically binds to HJ cruciform DNA, conferring on it an open structure. The RuvB hexamer acts as an ATP-dependent pump, pulling dsDNA into and through the RuvAB complex. RuvB forms 2 homohexamers on either side of HJ DNA bound by 1 or 2 RuvA tetramers; 4 subunits per hexamer contact DNA at a time. Coordinated motions by a converter formed by DNA-disengaged RuvB subunits stimulates ATP hydrolysis and nucleotide exchange. Immobilization of the converter enables RuvB to convert the ATP-contained energy into a lever motion, pulling 2 nucleotides of DNA out of the RuvA tetramer per ATP hydrolyzed, thus driving DNA branch migration. The RuvB motors rotate together with the DNA substrate, which together with the progressing nucleotide cycle form the mechanistic basis for DNA recombination by continuous HJ branch migration. Branch migration allows RuvC to scan DNA until it finds its consensus sequence, where it cleaves and resolves cruciform DNA.</text>
</comment>
<comment type="catalytic activity">
    <reaction evidence="1">
        <text>ATP + H2O = ADP + phosphate + H(+)</text>
        <dbReference type="Rhea" id="RHEA:13065"/>
        <dbReference type="ChEBI" id="CHEBI:15377"/>
        <dbReference type="ChEBI" id="CHEBI:15378"/>
        <dbReference type="ChEBI" id="CHEBI:30616"/>
        <dbReference type="ChEBI" id="CHEBI:43474"/>
        <dbReference type="ChEBI" id="CHEBI:456216"/>
    </reaction>
</comment>
<comment type="subunit">
    <text evidence="1">Homohexamer. Forms an RuvA(8)-RuvB(12)-Holliday junction (HJ) complex. HJ DNA is sandwiched between 2 RuvA tetramers; dsDNA enters through RuvA and exits via RuvB. An RuvB hexamer assembles on each DNA strand where it exits the tetramer. Each RuvB hexamer is contacted by two RuvA subunits (via domain III) on 2 adjacent RuvB subunits; this complex drives branch migration. In the full resolvosome a probable DNA-RuvA(4)-RuvB(12)-RuvC(2) complex forms which resolves the HJ.</text>
</comment>
<comment type="subcellular location">
    <subcellularLocation>
        <location evidence="1">Cytoplasm</location>
    </subcellularLocation>
</comment>
<comment type="domain">
    <text evidence="1">Has 3 domains, the large (RuvB-L) and small ATPase (RuvB-S) domains and the C-terminal head (RuvB-H) domain. The head domain binds DNA, while the ATPase domains jointly bind ATP, ADP or are empty depending on the state of the subunit in the translocation cycle. During a single DNA translocation step the structure of each domain remains the same, but their relative positions change.</text>
</comment>
<comment type="similarity">
    <text evidence="1">Belongs to the RuvB family.</text>
</comment>
<gene>
    <name evidence="1" type="primary">ruvB</name>
    <name type="ordered locus">Acel_1343</name>
</gene>
<feature type="chain" id="PRO_0000322774" description="Holliday junction branch migration complex subunit RuvB">
    <location>
        <begin position="1"/>
        <end position="367"/>
    </location>
</feature>
<feature type="region of interest" description="Large ATPase domain (RuvB-L)" evidence="1">
    <location>
        <begin position="2"/>
        <end position="196"/>
    </location>
</feature>
<feature type="region of interest" description="Small ATPAse domain (RuvB-S)" evidence="1">
    <location>
        <begin position="197"/>
        <end position="267"/>
    </location>
</feature>
<feature type="region of interest" description="Head domain (RuvB-H)" evidence="1">
    <location>
        <begin position="270"/>
        <end position="367"/>
    </location>
</feature>
<feature type="binding site" evidence="1">
    <location>
        <position position="35"/>
    </location>
    <ligand>
        <name>ATP</name>
        <dbReference type="ChEBI" id="CHEBI:30616"/>
    </ligand>
</feature>
<feature type="binding site" evidence="1">
    <location>
        <position position="36"/>
    </location>
    <ligand>
        <name>ATP</name>
        <dbReference type="ChEBI" id="CHEBI:30616"/>
    </ligand>
</feature>
<feature type="binding site" evidence="1">
    <location>
        <position position="77"/>
    </location>
    <ligand>
        <name>ATP</name>
        <dbReference type="ChEBI" id="CHEBI:30616"/>
    </ligand>
</feature>
<feature type="binding site" evidence="1">
    <location>
        <position position="80"/>
    </location>
    <ligand>
        <name>ATP</name>
        <dbReference type="ChEBI" id="CHEBI:30616"/>
    </ligand>
</feature>
<feature type="binding site" evidence="1">
    <location>
        <position position="81"/>
    </location>
    <ligand>
        <name>ATP</name>
        <dbReference type="ChEBI" id="CHEBI:30616"/>
    </ligand>
</feature>
<feature type="binding site" evidence="1">
    <location>
        <position position="81"/>
    </location>
    <ligand>
        <name>Mg(2+)</name>
        <dbReference type="ChEBI" id="CHEBI:18420"/>
    </ligand>
</feature>
<feature type="binding site" evidence="1">
    <location>
        <position position="82"/>
    </location>
    <ligand>
        <name>ATP</name>
        <dbReference type="ChEBI" id="CHEBI:30616"/>
    </ligand>
</feature>
<feature type="binding site" evidence="1">
    <location>
        <begin position="143"/>
        <end position="145"/>
    </location>
    <ligand>
        <name>ATP</name>
        <dbReference type="ChEBI" id="CHEBI:30616"/>
    </ligand>
</feature>
<feature type="binding site" evidence="1">
    <location>
        <position position="186"/>
    </location>
    <ligand>
        <name>ATP</name>
        <dbReference type="ChEBI" id="CHEBI:30616"/>
    </ligand>
</feature>
<feature type="binding site" evidence="1">
    <location>
        <position position="196"/>
    </location>
    <ligand>
        <name>ATP</name>
        <dbReference type="ChEBI" id="CHEBI:30616"/>
    </ligand>
</feature>
<feature type="binding site" evidence="1">
    <location>
        <position position="233"/>
    </location>
    <ligand>
        <name>ATP</name>
        <dbReference type="ChEBI" id="CHEBI:30616"/>
    </ligand>
</feature>
<feature type="binding site" evidence="1">
    <location>
        <position position="325"/>
    </location>
    <ligand>
        <name>DNA</name>
        <dbReference type="ChEBI" id="CHEBI:16991"/>
    </ligand>
</feature>
<feature type="binding site" evidence="1">
    <location>
        <position position="330"/>
    </location>
    <ligand>
        <name>DNA</name>
        <dbReference type="ChEBI" id="CHEBI:16991"/>
    </ligand>
</feature>
<dbReference type="EC" id="3.6.4.-" evidence="1"/>
<dbReference type="EMBL" id="CP000481">
    <property type="protein sequence ID" value="ABK53115.1"/>
    <property type="molecule type" value="Genomic_DNA"/>
</dbReference>
<dbReference type="RefSeq" id="WP_011720178.1">
    <property type="nucleotide sequence ID" value="NC_008578.1"/>
</dbReference>
<dbReference type="SMR" id="A0LUK5"/>
<dbReference type="FunCoup" id="A0LUK5">
    <property type="interactions" value="64"/>
</dbReference>
<dbReference type="STRING" id="351607.Acel_1343"/>
<dbReference type="KEGG" id="ace:Acel_1343"/>
<dbReference type="eggNOG" id="COG2255">
    <property type="taxonomic scope" value="Bacteria"/>
</dbReference>
<dbReference type="HOGENOM" id="CLU_055599_1_0_11"/>
<dbReference type="InParanoid" id="A0LUK5"/>
<dbReference type="Proteomes" id="UP000008221">
    <property type="component" value="Chromosome"/>
</dbReference>
<dbReference type="GO" id="GO:0005737">
    <property type="term" value="C:cytoplasm"/>
    <property type="evidence" value="ECO:0007669"/>
    <property type="project" value="UniProtKB-SubCell"/>
</dbReference>
<dbReference type="GO" id="GO:0048476">
    <property type="term" value="C:Holliday junction resolvase complex"/>
    <property type="evidence" value="ECO:0007669"/>
    <property type="project" value="UniProtKB-UniRule"/>
</dbReference>
<dbReference type="GO" id="GO:0005524">
    <property type="term" value="F:ATP binding"/>
    <property type="evidence" value="ECO:0007669"/>
    <property type="project" value="UniProtKB-UniRule"/>
</dbReference>
<dbReference type="GO" id="GO:0016887">
    <property type="term" value="F:ATP hydrolysis activity"/>
    <property type="evidence" value="ECO:0007669"/>
    <property type="project" value="InterPro"/>
</dbReference>
<dbReference type="GO" id="GO:0000400">
    <property type="term" value="F:four-way junction DNA binding"/>
    <property type="evidence" value="ECO:0007669"/>
    <property type="project" value="UniProtKB-UniRule"/>
</dbReference>
<dbReference type="GO" id="GO:0009378">
    <property type="term" value="F:four-way junction helicase activity"/>
    <property type="evidence" value="ECO:0007669"/>
    <property type="project" value="InterPro"/>
</dbReference>
<dbReference type="GO" id="GO:0006310">
    <property type="term" value="P:DNA recombination"/>
    <property type="evidence" value="ECO:0007669"/>
    <property type="project" value="UniProtKB-UniRule"/>
</dbReference>
<dbReference type="GO" id="GO:0006281">
    <property type="term" value="P:DNA repair"/>
    <property type="evidence" value="ECO:0007669"/>
    <property type="project" value="UniProtKB-UniRule"/>
</dbReference>
<dbReference type="CDD" id="cd00009">
    <property type="entry name" value="AAA"/>
    <property type="match status" value="1"/>
</dbReference>
<dbReference type="FunFam" id="1.10.8.60:FF:000023">
    <property type="entry name" value="Holliday junction ATP-dependent DNA helicase RuvB"/>
    <property type="match status" value="1"/>
</dbReference>
<dbReference type="Gene3D" id="1.10.8.60">
    <property type="match status" value="1"/>
</dbReference>
<dbReference type="Gene3D" id="3.40.50.300">
    <property type="entry name" value="P-loop containing nucleotide triphosphate hydrolases"/>
    <property type="match status" value="1"/>
</dbReference>
<dbReference type="Gene3D" id="1.10.10.10">
    <property type="entry name" value="Winged helix-like DNA-binding domain superfamily/Winged helix DNA-binding domain"/>
    <property type="match status" value="1"/>
</dbReference>
<dbReference type="HAMAP" id="MF_00016">
    <property type="entry name" value="DNA_HJ_migration_RuvB"/>
    <property type="match status" value="1"/>
</dbReference>
<dbReference type="InterPro" id="IPR003593">
    <property type="entry name" value="AAA+_ATPase"/>
</dbReference>
<dbReference type="InterPro" id="IPR041445">
    <property type="entry name" value="AAA_lid_4"/>
</dbReference>
<dbReference type="InterPro" id="IPR004605">
    <property type="entry name" value="DNA_helicase_Holl-junc_RuvB"/>
</dbReference>
<dbReference type="InterPro" id="IPR027417">
    <property type="entry name" value="P-loop_NTPase"/>
</dbReference>
<dbReference type="InterPro" id="IPR008824">
    <property type="entry name" value="RuvB-like_N"/>
</dbReference>
<dbReference type="InterPro" id="IPR008823">
    <property type="entry name" value="RuvB_C"/>
</dbReference>
<dbReference type="InterPro" id="IPR036388">
    <property type="entry name" value="WH-like_DNA-bd_sf"/>
</dbReference>
<dbReference type="InterPro" id="IPR036390">
    <property type="entry name" value="WH_DNA-bd_sf"/>
</dbReference>
<dbReference type="NCBIfam" id="NF000868">
    <property type="entry name" value="PRK00080.1"/>
    <property type="match status" value="1"/>
</dbReference>
<dbReference type="NCBIfam" id="TIGR00635">
    <property type="entry name" value="ruvB"/>
    <property type="match status" value="1"/>
</dbReference>
<dbReference type="PANTHER" id="PTHR42848">
    <property type="match status" value="1"/>
</dbReference>
<dbReference type="PANTHER" id="PTHR42848:SF1">
    <property type="entry name" value="HOLLIDAY JUNCTION BRANCH MIGRATION COMPLEX SUBUNIT RUVB"/>
    <property type="match status" value="1"/>
</dbReference>
<dbReference type="Pfam" id="PF17864">
    <property type="entry name" value="AAA_lid_4"/>
    <property type="match status" value="1"/>
</dbReference>
<dbReference type="Pfam" id="PF05491">
    <property type="entry name" value="RuvB_C"/>
    <property type="match status" value="1"/>
</dbReference>
<dbReference type="Pfam" id="PF05496">
    <property type="entry name" value="RuvB_N"/>
    <property type="match status" value="1"/>
</dbReference>
<dbReference type="SMART" id="SM00382">
    <property type="entry name" value="AAA"/>
    <property type="match status" value="1"/>
</dbReference>
<dbReference type="SUPFAM" id="SSF52540">
    <property type="entry name" value="P-loop containing nucleoside triphosphate hydrolases"/>
    <property type="match status" value="1"/>
</dbReference>
<dbReference type="SUPFAM" id="SSF46785">
    <property type="entry name" value="Winged helix' DNA-binding domain"/>
    <property type="match status" value="1"/>
</dbReference>
<reference key="1">
    <citation type="journal article" date="2009" name="Genome Res.">
        <title>Complete genome of the cellulolytic thermophile Acidothermus cellulolyticus 11B provides insights into its ecophysiological and evolutionary adaptations.</title>
        <authorList>
            <person name="Barabote R.D."/>
            <person name="Xie G."/>
            <person name="Leu D.H."/>
            <person name="Normand P."/>
            <person name="Necsulea A."/>
            <person name="Daubin V."/>
            <person name="Medigue C."/>
            <person name="Adney W.S."/>
            <person name="Xu X.C."/>
            <person name="Lapidus A."/>
            <person name="Parales R.E."/>
            <person name="Detter C."/>
            <person name="Pujic P."/>
            <person name="Bruce D."/>
            <person name="Lavire C."/>
            <person name="Challacombe J.F."/>
            <person name="Brettin T.S."/>
            <person name="Berry A.M."/>
        </authorList>
    </citation>
    <scope>NUCLEOTIDE SEQUENCE [LARGE SCALE GENOMIC DNA]</scope>
    <source>
        <strain>ATCC 43068 / DSM 8971 / 11B</strain>
    </source>
</reference>